<organism>
    <name type="scientific">Saccharomyces cerevisiae (strain ATCC 204508 / S288c)</name>
    <name type="common">Baker's yeast</name>
    <dbReference type="NCBI Taxonomy" id="559292"/>
    <lineage>
        <taxon>Eukaryota</taxon>
        <taxon>Fungi</taxon>
        <taxon>Dikarya</taxon>
        <taxon>Ascomycota</taxon>
        <taxon>Saccharomycotina</taxon>
        <taxon>Saccharomycetes</taxon>
        <taxon>Saccharomycetales</taxon>
        <taxon>Saccharomycetaceae</taxon>
        <taxon>Saccharomyces</taxon>
    </lineage>
</organism>
<feature type="chain" id="PRO_0000202692" description="Unfolded protein response-inducible protein 1">
    <location>
        <begin position="1"/>
        <end position="169"/>
    </location>
</feature>
<evidence type="ECO:0000269" key="1">
    <source>
    </source>
</evidence>
<evidence type="ECO:0000269" key="2">
    <source>
    </source>
</evidence>
<accession>P43604</accession>
<accession>D6VTQ6</accession>
<reference key="1">
    <citation type="journal article" date="1995" name="Nat. Genet.">
        <title>Analysis of the nucleotide sequence of chromosome VI from Saccharomyces cerevisiae.</title>
        <authorList>
            <person name="Murakami Y."/>
            <person name="Naitou M."/>
            <person name="Hagiwara H."/>
            <person name="Shibata T."/>
            <person name="Ozawa M."/>
            <person name="Sasanuma S."/>
            <person name="Sasanuma M."/>
            <person name="Tsuchiya Y."/>
            <person name="Soeda E."/>
            <person name="Yokoyama K."/>
            <person name="Yamazaki M."/>
            <person name="Tashiro H."/>
            <person name="Eki T."/>
        </authorList>
    </citation>
    <scope>NUCLEOTIDE SEQUENCE [LARGE SCALE GENOMIC DNA]</scope>
    <source>
        <strain>ATCC 204508 / S288c</strain>
    </source>
</reference>
<reference key="2">
    <citation type="journal article" date="2014" name="G3 (Bethesda)">
        <title>The reference genome sequence of Saccharomyces cerevisiae: Then and now.</title>
        <authorList>
            <person name="Engel S.R."/>
            <person name="Dietrich F.S."/>
            <person name="Fisk D.G."/>
            <person name="Binkley G."/>
            <person name="Balakrishnan R."/>
            <person name="Costanzo M.C."/>
            <person name="Dwight S.S."/>
            <person name="Hitz B.C."/>
            <person name="Karra K."/>
            <person name="Nash R.S."/>
            <person name="Weng S."/>
            <person name="Wong E.D."/>
            <person name="Lloyd P."/>
            <person name="Skrzypek M.S."/>
            <person name="Miyasato S.R."/>
            <person name="Simison M."/>
            <person name="Cherry J.M."/>
        </authorList>
    </citation>
    <scope>GENOME REANNOTATION</scope>
    <source>
        <strain>ATCC 204508 / S288c</strain>
    </source>
</reference>
<reference key="3">
    <citation type="journal article" date="1996" name="Yeast">
        <title>Fifteen open reading frames in a 30.8 kb region of the right arm of chromosome VI from Saccharomyces cerevisiae.</title>
        <authorList>
            <person name="Eki T."/>
            <person name="Naitou M."/>
            <person name="Hagiwara H."/>
            <person name="Abe M."/>
            <person name="Ozawa M."/>
            <person name="Sasanuma S."/>
            <person name="Sasanuma M."/>
            <person name="Tsuchiya Y."/>
            <person name="Shibata T."/>
            <person name="Watanabe K."/>
            <person name="Ono A."/>
            <person name="Yamazaki M."/>
            <person name="Tashiro H."/>
            <person name="Hanaoka F."/>
            <person name="Murakami Y."/>
        </authorList>
    </citation>
    <scope>NUCLEOTIDE SEQUENCE [GENOMIC DNA]</scope>
    <source>
        <strain>ATCC 204511 / S288c / AB972</strain>
    </source>
</reference>
<reference key="4">
    <citation type="journal article" date="2003" name="Nature">
        <title>Global analysis of protein expression in yeast.</title>
        <authorList>
            <person name="Ghaemmaghami S."/>
            <person name="Huh W.-K."/>
            <person name="Bower K."/>
            <person name="Howson R.W."/>
            <person name="Belle A."/>
            <person name="Dephoure N."/>
            <person name="O'Shea E.K."/>
            <person name="Weissman J.S."/>
        </authorList>
    </citation>
    <scope>LEVEL OF PROTEIN EXPRESSION [LARGE SCALE ANALYSIS]</scope>
</reference>
<reference key="5">
    <citation type="journal article" date="2009" name="Mol. Biol. Cell">
        <title>Analysis of quality control substrates in distinct cellular compartments reveals a unique role for Rpn4p in tolerating misfolded membrane proteins.</title>
        <authorList>
            <person name="Metzger M.B."/>
            <person name="Michaelis S."/>
        </authorList>
    </citation>
    <scope>FUNCTION</scope>
    <scope>INDUCTION</scope>
</reference>
<protein>
    <recommendedName>
        <fullName>Unfolded protein response-inducible protein 1</fullName>
        <shortName>UPR-L-inducible protein 1</shortName>
    </recommendedName>
</protein>
<sequence length="169" mass="18809">MTPYAVAITVALLIVTVSALQVNNSCVAFPPSNLRGKNGDGTNEQYATALLSIPWNGPPESLRDINLIELEPQVALYLLENYINHYYNTTRDNKCPNNHYLMGGQLGSSSDNRSLNDPQTMLWPEKKEDEKNCQETFKGACSCTKRFCKGYFSVNIFGINLNISYSSGK</sequence>
<name>ULI1_YEAST</name>
<dbReference type="EMBL" id="D50617">
    <property type="protein sequence ID" value="BAA09265.1"/>
    <property type="molecule type" value="Genomic_DNA"/>
</dbReference>
<dbReference type="EMBL" id="BK006940">
    <property type="protein sequence ID" value="DAA12466.1"/>
    <property type="molecule type" value="Genomic_DNA"/>
</dbReference>
<dbReference type="PIR" id="S56281">
    <property type="entry name" value="S56281"/>
</dbReference>
<dbReference type="RefSeq" id="NP_116682.3">
    <property type="nucleotide sequence ID" value="NM_001179991.3"/>
</dbReference>
<dbReference type="SMR" id="P43604"/>
<dbReference type="BioGRID" id="31180">
    <property type="interactions" value="21"/>
</dbReference>
<dbReference type="DIP" id="DIP-2811N"/>
<dbReference type="FunCoup" id="P43604">
    <property type="interactions" value="40"/>
</dbReference>
<dbReference type="IntAct" id="P43604">
    <property type="interactions" value="1"/>
</dbReference>
<dbReference type="STRING" id="4932.YFR026C"/>
<dbReference type="GlyGen" id="P43604">
    <property type="glycosylation" value="1 site"/>
</dbReference>
<dbReference type="PaxDb" id="4932-YFR026C"/>
<dbReference type="EnsemblFungi" id="YFR026C_mRNA">
    <property type="protein sequence ID" value="YFR026C"/>
    <property type="gene ID" value="YFR026C"/>
</dbReference>
<dbReference type="GeneID" id="850583"/>
<dbReference type="KEGG" id="sce:YFR026C"/>
<dbReference type="AGR" id="SGD:S000001922"/>
<dbReference type="SGD" id="S000001922">
    <property type="gene designation" value="ULI1"/>
</dbReference>
<dbReference type="VEuPathDB" id="FungiDB:YFR026C"/>
<dbReference type="HOGENOM" id="CLU_1579731_0_0_1"/>
<dbReference type="InParanoid" id="P43604"/>
<dbReference type="OMA" id="NNSCVAF"/>
<dbReference type="OrthoDB" id="4037856at2759"/>
<dbReference type="BioCyc" id="YEAST:G3O-30475-MONOMER"/>
<dbReference type="BioGRID-ORCS" id="850583">
    <property type="hits" value="0 hits in 10 CRISPR screens"/>
</dbReference>
<dbReference type="PRO" id="PR:P43604"/>
<dbReference type="Proteomes" id="UP000002311">
    <property type="component" value="Chromosome VI"/>
</dbReference>
<dbReference type="RNAct" id="P43604">
    <property type="molecule type" value="protein"/>
</dbReference>
<dbReference type="GO" id="GO:0005783">
    <property type="term" value="C:endoplasmic reticulum"/>
    <property type="evidence" value="ECO:0007005"/>
    <property type="project" value="SGD"/>
</dbReference>
<dbReference type="GO" id="GO:0030968">
    <property type="term" value="P:endoplasmic reticulum unfolded protein response"/>
    <property type="evidence" value="ECO:0000315"/>
    <property type="project" value="SGD"/>
</dbReference>
<gene>
    <name type="primary">ULI1</name>
    <name type="ordered locus">YFR026C</name>
</gene>
<keyword id="KW-1185">Reference proteome</keyword>
<keyword id="KW-0834">Unfolded protein response</keyword>
<proteinExistence type="evidence at protein level"/>
<comment type="function">
    <text evidence="2">Involved in the unfolded protein response (UPR), a transcriptional response which up-regulates genes that enable cells to cope with misfolded, endoplasmic reticulum-retained proteins. UPR is part of the endoplasmic reticulum quality control (ERQC) which prevents the exit of misfolded secretory and membrane proteins from the endoplasmic reticulum.</text>
</comment>
<comment type="induction">
    <text evidence="2">By the unfolded protein response (UPR).</text>
</comment>
<comment type="miscellaneous">
    <text evidence="1">Present with 721 molecules/cell in log phase SD medium.</text>
</comment>